<sequence>MATAKPKKKNPRLASGRKRVRQDVKLNAANTSLRSKYRTAVKNVEKAVLAGDKDKAKDLFAKAQSIVDTISDKGIFHKNKAARDKSRLSAKVKALALKAVETPTAA</sequence>
<feature type="chain" id="PRO_1000014623" description="Small ribosomal subunit protein bS20">
    <location>
        <begin position="1"/>
        <end position="106"/>
    </location>
</feature>
<feature type="region of interest" description="Disordered" evidence="2">
    <location>
        <begin position="1"/>
        <end position="21"/>
    </location>
</feature>
<feature type="compositionally biased region" description="Basic residues" evidence="2">
    <location>
        <begin position="1"/>
        <end position="20"/>
    </location>
</feature>
<dbReference type="EMBL" id="CP000529">
    <property type="protein sequence ID" value="ABM38308.1"/>
    <property type="molecule type" value="Genomic_DNA"/>
</dbReference>
<dbReference type="RefSeq" id="WP_011802380.1">
    <property type="nucleotide sequence ID" value="NC_008781.1"/>
</dbReference>
<dbReference type="SMR" id="A1VRN0"/>
<dbReference type="STRING" id="365044.Pnap_3009"/>
<dbReference type="KEGG" id="pna:Pnap_3009"/>
<dbReference type="eggNOG" id="COG0268">
    <property type="taxonomic scope" value="Bacteria"/>
</dbReference>
<dbReference type="HOGENOM" id="CLU_160655_4_0_4"/>
<dbReference type="OrthoDB" id="9807974at2"/>
<dbReference type="Proteomes" id="UP000000644">
    <property type="component" value="Chromosome"/>
</dbReference>
<dbReference type="GO" id="GO:0005829">
    <property type="term" value="C:cytosol"/>
    <property type="evidence" value="ECO:0007669"/>
    <property type="project" value="TreeGrafter"/>
</dbReference>
<dbReference type="GO" id="GO:0015935">
    <property type="term" value="C:small ribosomal subunit"/>
    <property type="evidence" value="ECO:0007669"/>
    <property type="project" value="TreeGrafter"/>
</dbReference>
<dbReference type="GO" id="GO:0070181">
    <property type="term" value="F:small ribosomal subunit rRNA binding"/>
    <property type="evidence" value="ECO:0007669"/>
    <property type="project" value="TreeGrafter"/>
</dbReference>
<dbReference type="GO" id="GO:0003735">
    <property type="term" value="F:structural constituent of ribosome"/>
    <property type="evidence" value="ECO:0007669"/>
    <property type="project" value="InterPro"/>
</dbReference>
<dbReference type="GO" id="GO:0006412">
    <property type="term" value="P:translation"/>
    <property type="evidence" value="ECO:0007669"/>
    <property type="project" value="UniProtKB-UniRule"/>
</dbReference>
<dbReference type="FunFam" id="1.20.58.110:FF:000001">
    <property type="entry name" value="30S ribosomal protein S20"/>
    <property type="match status" value="1"/>
</dbReference>
<dbReference type="Gene3D" id="1.20.58.110">
    <property type="entry name" value="Ribosomal protein S20"/>
    <property type="match status" value="1"/>
</dbReference>
<dbReference type="HAMAP" id="MF_00500">
    <property type="entry name" value="Ribosomal_bS20"/>
    <property type="match status" value="1"/>
</dbReference>
<dbReference type="InterPro" id="IPR002583">
    <property type="entry name" value="Ribosomal_bS20"/>
</dbReference>
<dbReference type="InterPro" id="IPR036510">
    <property type="entry name" value="Ribosomal_bS20_sf"/>
</dbReference>
<dbReference type="NCBIfam" id="TIGR00029">
    <property type="entry name" value="S20"/>
    <property type="match status" value="1"/>
</dbReference>
<dbReference type="PANTHER" id="PTHR33398">
    <property type="entry name" value="30S RIBOSOMAL PROTEIN S20"/>
    <property type="match status" value="1"/>
</dbReference>
<dbReference type="PANTHER" id="PTHR33398:SF1">
    <property type="entry name" value="SMALL RIBOSOMAL SUBUNIT PROTEIN BS20C"/>
    <property type="match status" value="1"/>
</dbReference>
<dbReference type="Pfam" id="PF01649">
    <property type="entry name" value="Ribosomal_S20p"/>
    <property type="match status" value="1"/>
</dbReference>
<dbReference type="SUPFAM" id="SSF46992">
    <property type="entry name" value="Ribosomal protein S20"/>
    <property type="match status" value="1"/>
</dbReference>
<comment type="function">
    <text evidence="1">Binds directly to 16S ribosomal RNA.</text>
</comment>
<comment type="similarity">
    <text evidence="1">Belongs to the bacterial ribosomal protein bS20 family.</text>
</comment>
<reference key="1">
    <citation type="journal article" date="2009" name="Environ. Microbiol.">
        <title>The genome of Polaromonas naphthalenivorans strain CJ2, isolated from coal tar-contaminated sediment, reveals physiological and metabolic versatility and evolution through extensive horizontal gene transfer.</title>
        <authorList>
            <person name="Yagi J.M."/>
            <person name="Sims D."/>
            <person name="Brettin T."/>
            <person name="Bruce D."/>
            <person name="Madsen E.L."/>
        </authorList>
    </citation>
    <scope>NUCLEOTIDE SEQUENCE [LARGE SCALE GENOMIC DNA]</scope>
    <source>
        <strain>CJ2</strain>
    </source>
</reference>
<keyword id="KW-1185">Reference proteome</keyword>
<keyword id="KW-0687">Ribonucleoprotein</keyword>
<keyword id="KW-0689">Ribosomal protein</keyword>
<keyword id="KW-0694">RNA-binding</keyword>
<keyword id="KW-0699">rRNA-binding</keyword>
<name>RS20_POLNA</name>
<accession>A1VRN0</accession>
<protein>
    <recommendedName>
        <fullName evidence="1">Small ribosomal subunit protein bS20</fullName>
    </recommendedName>
    <alternativeName>
        <fullName evidence="3">30S ribosomal protein S20</fullName>
    </alternativeName>
</protein>
<organism>
    <name type="scientific">Polaromonas naphthalenivorans (strain CJ2)</name>
    <dbReference type="NCBI Taxonomy" id="365044"/>
    <lineage>
        <taxon>Bacteria</taxon>
        <taxon>Pseudomonadati</taxon>
        <taxon>Pseudomonadota</taxon>
        <taxon>Betaproteobacteria</taxon>
        <taxon>Burkholderiales</taxon>
        <taxon>Comamonadaceae</taxon>
        <taxon>Polaromonas</taxon>
    </lineage>
</organism>
<gene>
    <name evidence="1" type="primary">rpsT</name>
    <name type="ordered locus">Pnap_3009</name>
</gene>
<evidence type="ECO:0000255" key="1">
    <source>
        <dbReference type="HAMAP-Rule" id="MF_00500"/>
    </source>
</evidence>
<evidence type="ECO:0000256" key="2">
    <source>
        <dbReference type="SAM" id="MobiDB-lite"/>
    </source>
</evidence>
<evidence type="ECO:0000305" key="3"/>
<proteinExistence type="inferred from homology"/>